<sequence length="484" mass="54110">MDFTSLETTTFEEVVIALGSNVGNRMNNFKEALRLMKDYGISVTRHSCLYETEPVHVTDQPRFLNAAIRGVTKLKPHELLNVLKKIEKEMGREENGLRYGPRPLDLDILFYGKHKIISDKLIIPHERIWERPFVLAPLVDLLGTEDIDNDKIVAYWHSLSMHSGGIFQAWERLGGESLLGKDGIIQRVIPIGDHLWDFSKKTYVMGILNLTPDSFSDGGKFQSVDTAVSRVRSMISEGVDIIDIGAQSTRPMASRISSQEEIDRLIPVLKVVRGMAEMKGKLISVDTFNSEVALEAIRNGADILNDVSGGSLDENMHKVVADSDVPYMIMHMRGDPCTMQNKENLEYNEICKDVATELYERVREAELSGIPAWRIMIDPGIGFSKGIDHNLDIVMELPKIREEMAKKSIGLSHAPILIGPSRKRFLGDICGRPEASERDAATVACVTAGILKGANIIRVHNVRDNVDAARLCDAMMTKRFKNVD</sequence>
<organism evidence="11">
    <name type="scientific">Arabidopsis thaliana</name>
    <name type="common">Mouse-ear cress</name>
    <dbReference type="NCBI Taxonomy" id="3702"/>
    <lineage>
        <taxon>Eukaryota</taxon>
        <taxon>Viridiplantae</taxon>
        <taxon>Streptophyta</taxon>
        <taxon>Embryophyta</taxon>
        <taxon>Tracheophyta</taxon>
        <taxon>Spermatophyta</taxon>
        <taxon>Magnoliopsida</taxon>
        <taxon>eudicotyledons</taxon>
        <taxon>Gunneridae</taxon>
        <taxon>Pentapetalae</taxon>
        <taxon>rosids</taxon>
        <taxon>malvids</taxon>
        <taxon>Brassicales</taxon>
        <taxon>Brassicaceae</taxon>
        <taxon>Camelineae</taxon>
        <taxon>Arabidopsis</taxon>
    </lineage>
</organism>
<comment type="function">
    <text evidence="4 5">Catalyzes the first two consecutive steps of tetrahydrofolate biosynthesis (PubMed:17289662). Plays a role in seed stress response and survival (PubMed:17289662, PubMed:21996493).</text>
</comment>
<comment type="catalytic activity">
    <reaction evidence="4">
        <text>6-hydroxymethyl-7,8-dihydropterin + ATP = (7,8-dihydropterin-6-yl)methyl diphosphate + AMP + H(+)</text>
        <dbReference type="Rhea" id="RHEA:11412"/>
        <dbReference type="ChEBI" id="CHEBI:15378"/>
        <dbReference type="ChEBI" id="CHEBI:30616"/>
        <dbReference type="ChEBI" id="CHEBI:44841"/>
        <dbReference type="ChEBI" id="CHEBI:72950"/>
        <dbReference type="ChEBI" id="CHEBI:456215"/>
        <dbReference type="EC" id="2.7.6.3"/>
    </reaction>
</comment>
<comment type="catalytic activity">
    <reaction evidence="4">
        <text>(7,8-dihydropterin-6-yl)methyl diphosphate + 4-aminobenzoate = 7,8-dihydropteroate + diphosphate</text>
        <dbReference type="Rhea" id="RHEA:19949"/>
        <dbReference type="ChEBI" id="CHEBI:17836"/>
        <dbReference type="ChEBI" id="CHEBI:17839"/>
        <dbReference type="ChEBI" id="CHEBI:33019"/>
        <dbReference type="ChEBI" id="CHEBI:72950"/>
        <dbReference type="EC" id="2.5.1.15"/>
    </reaction>
</comment>
<comment type="cofactor">
    <cofactor evidence="1">
        <name>Mg(2+)</name>
        <dbReference type="ChEBI" id="CHEBI:18420"/>
    </cofactor>
</comment>
<comment type="activity regulation">
    <text evidence="4">Inhibited by sulfanilamide.</text>
</comment>
<comment type="biophysicochemical properties">
    <kinetics>
        <KM evidence="4">30 uM for ATP</KM>
    </kinetics>
</comment>
<comment type="pathway">
    <text evidence="7">Cofactor biosynthesis; tetrahydrofolate biosynthesis; 2-amino-4-hydroxy-6-hydroxymethyl-7,8-dihydropteridine diphosphate from 7,8-dihydroneopterin triphosphate: step 4/4.</text>
</comment>
<comment type="pathway">
    <text evidence="7">Cofactor biosynthesis; tetrahydrofolate biosynthesis; 7,8-dihydrofolate from 2-amino-4-hydroxy-6-hydroxymethyl-7,8-dihydropteridine diphosphate and 4-aminobenzoate: step 1/2.</text>
</comment>
<comment type="subcellular location">
    <subcellularLocation>
        <location evidence="4">Cytoplasm</location>
        <location evidence="4">Cytosol</location>
    </subcellularLocation>
</comment>
<comment type="tissue specificity">
    <text evidence="4">Expressed exclusively in reproductive tissues.</text>
</comment>
<comment type="developmental stage">
    <text evidence="4">Expressed in early stages of seed development, until the late globular stage of embryo. Not detected at the heart stage of embryo development.</text>
</comment>
<comment type="induction">
    <text evidence="4 5">Up-regulated by slat stress (PubMed:17289662). Up-regulated by oxidative stress (PubMed:21996493).</text>
</comment>
<comment type="disruption phenotype">
    <text evidence="4 5">No visible phenotype (PubMed:17289662). Increased sensitivity to oxidative stress (PubMed:21996493).</text>
</comment>
<comment type="similarity">
    <text evidence="7">In the N-terminal section; belongs to the HPPK family.</text>
</comment>
<comment type="similarity">
    <text evidence="7">In the C-terminal section; belongs to the DHPS family.</text>
</comment>
<comment type="sequence caution" evidence="7">
    <conflict type="erroneous gene model prediction">
        <sequence resource="EMBL-CDS" id="AAF27067"/>
    </conflict>
    <text>Translation N-terminally extended.</text>
</comment>
<comment type="sequence caution" evidence="7">
    <conflict type="erroneous gene model prediction">
        <sequence resource="EMBL-CDS" id="AAG52504"/>
    </conflict>
    <text>Translation N-terminally extended.</text>
</comment>
<dbReference type="EC" id="2.7.6.3" evidence="4"/>
<dbReference type="EC" id="2.5.1.15" evidence="4"/>
<dbReference type="EMBL" id="AJ866732">
    <property type="protein sequence ID" value="CAI29255.1"/>
    <property type="molecule type" value="mRNA"/>
</dbReference>
<dbReference type="EMBL" id="AC008262">
    <property type="protein sequence ID" value="AAF27067.1"/>
    <property type="status" value="ALT_SEQ"/>
    <property type="molecule type" value="Genomic_DNA"/>
</dbReference>
<dbReference type="EMBL" id="AC018364">
    <property type="protein sequence ID" value="AAG52504.1"/>
    <property type="status" value="ALT_SEQ"/>
    <property type="molecule type" value="Genomic_DNA"/>
</dbReference>
<dbReference type="EMBL" id="CP002684">
    <property type="protein sequence ID" value="AEE34892.1"/>
    <property type="molecule type" value="Genomic_DNA"/>
</dbReference>
<dbReference type="PIR" id="H96715">
    <property type="entry name" value="H96715"/>
</dbReference>
<dbReference type="RefSeq" id="NP_001319354.1">
    <property type="nucleotide sequence ID" value="NM_001334402.1"/>
</dbReference>
<dbReference type="PDB" id="7MPY">
    <property type="method" value="X-ray"/>
    <property type="resolution" value="2.30 A"/>
    <property type="chains" value="A/B=2-484"/>
</dbReference>
<dbReference type="PDBsum" id="7MPY"/>
<dbReference type="SMR" id="Q1ENB6"/>
<dbReference type="FunCoup" id="Q1ENB6">
    <property type="interactions" value="429"/>
</dbReference>
<dbReference type="STRING" id="3702.Q1ENB6"/>
<dbReference type="iPTMnet" id="Q1ENB6"/>
<dbReference type="PaxDb" id="3702-AT1G69190.1"/>
<dbReference type="ProteomicsDB" id="228972"/>
<dbReference type="EnsemblPlants" id="AT1G69190.1">
    <property type="protein sequence ID" value="AT1G69190.1"/>
    <property type="gene ID" value="AT1G69190"/>
</dbReference>
<dbReference type="GeneID" id="843250"/>
<dbReference type="Gramene" id="AT1G69190.1">
    <property type="protein sequence ID" value="AT1G69190.1"/>
    <property type="gene ID" value="AT1G69190"/>
</dbReference>
<dbReference type="KEGG" id="ath:AT1G69190"/>
<dbReference type="Araport" id="AT1G69190"/>
<dbReference type="TAIR" id="AT1G69190"/>
<dbReference type="eggNOG" id="KOG2544">
    <property type="taxonomic scope" value="Eukaryota"/>
</dbReference>
<dbReference type="HOGENOM" id="CLU_008023_2_1_1"/>
<dbReference type="InParanoid" id="Q1ENB6"/>
<dbReference type="OMA" id="PYVIMHM"/>
<dbReference type="PhylomeDB" id="Q1ENB6"/>
<dbReference type="BioCyc" id="ARA:AT1G69190-MONOMER"/>
<dbReference type="BRENDA" id="2.5.1.15">
    <property type="organism ID" value="399"/>
</dbReference>
<dbReference type="BRENDA" id="2.7.6.3">
    <property type="organism ID" value="399"/>
</dbReference>
<dbReference type="SABIO-RK" id="Q1ENB6"/>
<dbReference type="UniPathway" id="UPA00077">
    <property type="reaction ID" value="UER00155"/>
</dbReference>
<dbReference type="UniPathway" id="UPA00077">
    <property type="reaction ID" value="UER00156"/>
</dbReference>
<dbReference type="PRO" id="PR:Q1ENB6"/>
<dbReference type="Proteomes" id="UP000006548">
    <property type="component" value="Chromosome 1"/>
</dbReference>
<dbReference type="ExpressionAtlas" id="Q1ENB6">
    <property type="expression patterns" value="baseline and differential"/>
</dbReference>
<dbReference type="GO" id="GO:0005829">
    <property type="term" value="C:cytosol"/>
    <property type="evidence" value="ECO:0000314"/>
    <property type="project" value="TAIR"/>
</dbReference>
<dbReference type="GO" id="GO:0003848">
    <property type="term" value="F:2-amino-4-hydroxy-6-hydroxymethyldihydropteridine diphosphokinase activity"/>
    <property type="evidence" value="ECO:0000314"/>
    <property type="project" value="TAIR"/>
</dbReference>
<dbReference type="GO" id="GO:0005524">
    <property type="term" value="F:ATP binding"/>
    <property type="evidence" value="ECO:0007669"/>
    <property type="project" value="UniProtKB-KW"/>
</dbReference>
<dbReference type="GO" id="GO:0004156">
    <property type="term" value="F:dihydropteroate synthase activity"/>
    <property type="evidence" value="ECO:0000314"/>
    <property type="project" value="TAIR"/>
</dbReference>
<dbReference type="GO" id="GO:0016301">
    <property type="term" value="F:kinase activity"/>
    <property type="evidence" value="ECO:0007669"/>
    <property type="project" value="UniProtKB-KW"/>
</dbReference>
<dbReference type="GO" id="GO:0046872">
    <property type="term" value="F:metal ion binding"/>
    <property type="evidence" value="ECO:0007669"/>
    <property type="project" value="UniProtKB-KW"/>
</dbReference>
<dbReference type="GO" id="GO:0046656">
    <property type="term" value="P:folic acid biosynthetic process"/>
    <property type="evidence" value="ECO:0007669"/>
    <property type="project" value="UniProtKB-KW"/>
</dbReference>
<dbReference type="GO" id="GO:0006979">
    <property type="term" value="P:response to oxidative stress"/>
    <property type="evidence" value="ECO:0000315"/>
    <property type="project" value="TAIR"/>
</dbReference>
<dbReference type="GO" id="GO:0046654">
    <property type="term" value="P:tetrahydrofolate biosynthetic process"/>
    <property type="evidence" value="ECO:0000314"/>
    <property type="project" value="TAIR"/>
</dbReference>
<dbReference type="CDD" id="cd00739">
    <property type="entry name" value="DHPS"/>
    <property type="match status" value="1"/>
</dbReference>
<dbReference type="CDD" id="cd00483">
    <property type="entry name" value="HPPK"/>
    <property type="match status" value="1"/>
</dbReference>
<dbReference type="FunFam" id="3.20.20.20:FF:000006">
    <property type="entry name" value="Dihydropteroate synthase"/>
    <property type="match status" value="1"/>
</dbReference>
<dbReference type="FunFam" id="3.30.70.560:FF:000003">
    <property type="entry name" value="Folate synthesis bifunctional protein"/>
    <property type="match status" value="1"/>
</dbReference>
<dbReference type="Gene3D" id="3.30.70.560">
    <property type="entry name" value="7,8-Dihydro-6-hydroxymethylpterin-pyrophosphokinase HPPK"/>
    <property type="match status" value="1"/>
</dbReference>
<dbReference type="Gene3D" id="3.20.20.20">
    <property type="entry name" value="Dihydropteroate synthase-like"/>
    <property type="match status" value="1"/>
</dbReference>
<dbReference type="InterPro" id="IPR045031">
    <property type="entry name" value="DHP_synth-like"/>
</dbReference>
<dbReference type="InterPro" id="IPR006390">
    <property type="entry name" value="DHP_synth_dom"/>
</dbReference>
<dbReference type="InterPro" id="IPR011005">
    <property type="entry name" value="Dihydropteroate_synth-like_sf"/>
</dbReference>
<dbReference type="InterPro" id="IPR000550">
    <property type="entry name" value="Hppk"/>
</dbReference>
<dbReference type="InterPro" id="IPR035907">
    <property type="entry name" value="Hppk_sf"/>
</dbReference>
<dbReference type="InterPro" id="IPR000489">
    <property type="entry name" value="Pterin-binding_dom"/>
</dbReference>
<dbReference type="NCBIfam" id="TIGR01496">
    <property type="entry name" value="DHPS"/>
    <property type="match status" value="1"/>
</dbReference>
<dbReference type="NCBIfam" id="TIGR01498">
    <property type="entry name" value="folK"/>
    <property type="match status" value="1"/>
</dbReference>
<dbReference type="PANTHER" id="PTHR20941">
    <property type="entry name" value="FOLATE SYNTHESIS PROTEINS"/>
    <property type="match status" value="1"/>
</dbReference>
<dbReference type="PANTHER" id="PTHR20941:SF1">
    <property type="entry name" value="FOLIC ACID SYNTHESIS PROTEIN FOL1"/>
    <property type="match status" value="1"/>
</dbReference>
<dbReference type="Pfam" id="PF01288">
    <property type="entry name" value="HPPK"/>
    <property type="match status" value="1"/>
</dbReference>
<dbReference type="Pfam" id="PF00809">
    <property type="entry name" value="Pterin_bind"/>
    <property type="match status" value="1"/>
</dbReference>
<dbReference type="SUPFAM" id="SSF55083">
    <property type="entry name" value="6-hydroxymethyl-7,8-dihydropterin pyrophosphokinase, HPPK"/>
    <property type="match status" value="1"/>
</dbReference>
<dbReference type="SUPFAM" id="SSF51717">
    <property type="entry name" value="Dihydropteroate synthetase-like"/>
    <property type="match status" value="1"/>
</dbReference>
<dbReference type="PROSITE" id="PS00792">
    <property type="entry name" value="DHPS_1"/>
    <property type="match status" value="1"/>
</dbReference>
<dbReference type="PROSITE" id="PS00793">
    <property type="entry name" value="DHPS_2"/>
    <property type="match status" value="1"/>
</dbReference>
<dbReference type="PROSITE" id="PS00794">
    <property type="entry name" value="HPPK"/>
    <property type="match status" value="1"/>
</dbReference>
<dbReference type="PROSITE" id="PS50972">
    <property type="entry name" value="PTERIN_BINDING"/>
    <property type="match status" value="1"/>
</dbReference>
<evidence type="ECO:0000250" key="1">
    <source>
        <dbReference type="UniProtKB" id="P0AC13"/>
    </source>
</evidence>
<evidence type="ECO:0000250" key="2">
    <source>
        <dbReference type="UniProtKB" id="P9WND1"/>
    </source>
</evidence>
<evidence type="ECO:0000255" key="3">
    <source>
        <dbReference type="PROSITE-ProRule" id="PRU00334"/>
    </source>
</evidence>
<evidence type="ECO:0000269" key="4">
    <source>
    </source>
</evidence>
<evidence type="ECO:0000269" key="5">
    <source>
    </source>
</evidence>
<evidence type="ECO:0000303" key="6">
    <source>
    </source>
</evidence>
<evidence type="ECO:0000305" key="7"/>
<evidence type="ECO:0000312" key="8">
    <source>
        <dbReference type="Araport" id="AT1G69190"/>
    </source>
</evidence>
<evidence type="ECO:0000312" key="9">
    <source>
        <dbReference type="EMBL" id="AAF27067.1"/>
    </source>
</evidence>
<evidence type="ECO:0000312" key="10">
    <source>
        <dbReference type="EMBL" id="AAG52504.1"/>
    </source>
</evidence>
<evidence type="ECO:0000312" key="11">
    <source>
        <dbReference type="EMBL" id="CAI29255.1"/>
    </source>
</evidence>
<evidence type="ECO:0007829" key="12">
    <source>
        <dbReference type="PDB" id="7MPY"/>
    </source>
</evidence>
<reference key="1">
    <citation type="journal article" date="2007" name="J. Biol. Chem.">
        <title>Cytosolic hydroxymethyldihydropterin pyrophosphokinase/dihydropteroate synthase from Arabidopsis thaliana: a specific role in early development and stress response.</title>
        <authorList>
            <person name="Storozhenko S."/>
            <person name="Navarrete O."/>
            <person name="Ravanel S."/>
            <person name="De Brouwer V."/>
            <person name="Chaerle P."/>
            <person name="Zhang G.F."/>
            <person name="Bastien O."/>
            <person name="Lambert W."/>
            <person name="Rebeille F."/>
            <person name="Van Der Straeten D."/>
        </authorList>
    </citation>
    <scope>NUCLEOTIDE SEQUENCE [MRNA]</scope>
    <scope>FUNCTION</scope>
    <scope>CATALYTIC ACTIVITY</scope>
    <scope>BIOPHYSICOCHEMICAL PROPERTIES</scope>
    <scope>ACTIVITY REGULATION</scope>
    <scope>SUBCELLULAR LOCATION</scope>
    <scope>TISSUE SPECIFICITY</scope>
    <scope>DEVELOPMENTAL STAGE</scope>
    <scope>INDUCTION BY SALT STRESS</scope>
    <scope>DISRUPTION PHENOTYPE</scope>
    <source>
        <strain>cv. Columbia</strain>
    </source>
</reference>
<reference key="2">
    <citation type="journal article" date="2000" name="Nature">
        <title>Sequence and analysis of chromosome 1 of the plant Arabidopsis thaliana.</title>
        <authorList>
            <person name="Theologis A."/>
            <person name="Ecker J.R."/>
            <person name="Palm C.J."/>
            <person name="Federspiel N.A."/>
            <person name="Kaul S."/>
            <person name="White O."/>
            <person name="Alonso J."/>
            <person name="Altafi H."/>
            <person name="Araujo R."/>
            <person name="Bowman C.L."/>
            <person name="Brooks S.Y."/>
            <person name="Buehler E."/>
            <person name="Chan A."/>
            <person name="Chao Q."/>
            <person name="Chen H."/>
            <person name="Cheuk R.F."/>
            <person name="Chin C.W."/>
            <person name="Chung M.K."/>
            <person name="Conn L."/>
            <person name="Conway A.B."/>
            <person name="Conway A.R."/>
            <person name="Creasy T.H."/>
            <person name="Dewar K."/>
            <person name="Dunn P."/>
            <person name="Etgu P."/>
            <person name="Feldblyum T.V."/>
            <person name="Feng J.-D."/>
            <person name="Fong B."/>
            <person name="Fujii C.Y."/>
            <person name="Gill J.E."/>
            <person name="Goldsmith A.D."/>
            <person name="Haas B."/>
            <person name="Hansen N.F."/>
            <person name="Hughes B."/>
            <person name="Huizar L."/>
            <person name="Hunter J.L."/>
            <person name="Jenkins J."/>
            <person name="Johnson-Hopson C."/>
            <person name="Khan S."/>
            <person name="Khaykin E."/>
            <person name="Kim C.J."/>
            <person name="Koo H.L."/>
            <person name="Kremenetskaia I."/>
            <person name="Kurtz D.B."/>
            <person name="Kwan A."/>
            <person name="Lam B."/>
            <person name="Langin-Hooper S."/>
            <person name="Lee A."/>
            <person name="Lee J.M."/>
            <person name="Lenz C.A."/>
            <person name="Li J.H."/>
            <person name="Li Y.-P."/>
            <person name="Lin X."/>
            <person name="Liu S.X."/>
            <person name="Liu Z.A."/>
            <person name="Luros J.S."/>
            <person name="Maiti R."/>
            <person name="Marziali A."/>
            <person name="Militscher J."/>
            <person name="Miranda M."/>
            <person name="Nguyen M."/>
            <person name="Nierman W.C."/>
            <person name="Osborne B.I."/>
            <person name="Pai G."/>
            <person name="Peterson J."/>
            <person name="Pham P.K."/>
            <person name="Rizzo M."/>
            <person name="Rooney T."/>
            <person name="Rowley D."/>
            <person name="Sakano H."/>
            <person name="Salzberg S.L."/>
            <person name="Schwartz J.R."/>
            <person name="Shinn P."/>
            <person name="Southwick A.M."/>
            <person name="Sun H."/>
            <person name="Tallon L.J."/>
            <person name="Tambunga G."/>
            <person name="Toriumi M.J."/>
            <person name="Town C.D."/>
            <person name="Utterback T."/>
            <person name="Van Aken S."/>
            <person name="Vaysberg M."/>
            <person name="Vysotskaia V.S."/>
            <person name="Walker M."/>
            <person name="Wu D."/>
            <person name="Yu G."/>
            <person name="Fraser C.M."/>
            <person name="Venter J.C."/>
            <person name="Davis R.W."/>
        </authorList>
    </citation>
    <scope>NUCLEOTIDE SEQUENCE [LARGE SCALE GENOMIC DNA]</scope>
    <source>
        <strain>cv. Columbia</strain>
    </source>
</reference>
<reference key="3">
    <citation type="journal article" date="2017" name="Plant J.">
        <title>Araport11: a complete reannotation of the Arabidopsis thaliana reference genome.</title>
        <authorList>
            <person name="Cheng C.Y."/>
            <person name="Krishnakumar V."/>
            <person name="Chan A.P."/>
            <person name="Thibaud-Nissen F."/>
            <person name="Schobel S."/>
            <person name="Town C.D."/>
        </authorList>
    </citation>
    <scope>GENOME REANNOTATION</scope>
    <source>
        <strain>cv. Columbia</strain>
    </source>
</reference>
<reference key="4">
    <citation type="journal article" date="2012" name="Phytochemistry">
        <title>A folate independent role for cytosolic HPPK/DHPS upon stress in Arabidopsis thaliana.</title>
        <authorList>
            <person name="Navarrete O."/>
            <person name="Van Daele J."/>
            <person name="Stove C."/>
            <person name="Lambert W."/>
            <person name="Van Der Straeten D."/>
            <person name="Storozhenko S."/>
        </authorList>
    </citation>
    <scope>FUNCTION</scope>
    <scope>DISRUPTION PHENOTYPE</scope>
    <scope>INDUCTION BY OXIDATIVE STRESS</scope>
</reference>
<feature type="chain" id="PRO_0000432867" description="Folate synthesis bifunctional protein">
    <location>
        <begin position="1"/>
        <end position="484"/>
    </location>
</feature>
<feature type="domain" description="Pterin-binding" evidence="3">
    <location>
        <begin position="202"/>
        <end position="470"/>
    </location>
</feature>
<feature type="region of interest" description="HPPK" evidence="7">
    <location>
        <begin position="15"/>
        <end position="141"/>
    </location>
</feature>
<feature type="region of interest" description="DHPS">
    <location>
        <begin position="204"/>
        <end position="484"/>
    </location>
</feature>
<feature type="binding site" evidence="2">
    <location>
        <position position="209"/>
    </location>
    <ligand>
        <name>Mg(2+)</name>
        <dbReference type="ChEBI" id="CHEBI:18420"/>
    </ligand>
</feature>
<feature type="binding site" evidence="1">
    <location>
        <position position="249"/>
    </location>
    <ligand>
        <name>(7,8-dihydropterin-6-yl)methyl diphosphate</name>
        <dbReference type="ChEBI" id="CHEBI:72950"/>
    </ligand>
</feature>
<feature type="binding site" evidence="1">
    <location>
        <position position="286"/>
    </location>
    <ligand>
        <name>(7,8-dihydropterin-6-yl)methyl diphosphate</name>
        <dbReference type="ChEBI" id="CHEBI:72950"/>
    </ligand>
</feature>
<feature type="binding site" evidence="1">
    <location>
        <position position="305"/>
    </location>
    <ligand>
        <name>(7,8-dihydropterin-6-yl)methyl diphosphate</name>
        <dbReference type="ChEBI" id="CHEBI:72950"/>
    </ligand>
</feature>
<feature type="binding site" evidence="1">
    <location>
        <position position="378"/>
    </location>
    <ligand>
        <name>(7,8-dihydropterin-6-yl)methyl diphosphate</name>
        <dbReference type="ChEBI" id="CHEBI:72950"/>
    </ligand>
</feature>
<feature type="binding site" evidence="1">
    <location>
        <position position="423"/>
    </location>
    <ligand>
        <name>(7,8-dihydropterin-6-yl)methyl diphosphate</name>
        <dbReference type="ChEBI" id="CHEBI:72950"/>
    </ligand>
</feature>
<feature type="binding site" evidence="1">
    <location>
        <begin position="458"/>
        <end position="460"/>
    </location>
    <ligand>
        <name>(7,8-dihydropterin-6-yl)methyl diphosphate</name>
        <dbReference type="ChEBI" id="CHEBI:72950"/>
    </ligand>
</feature>
<feature type="strand" evidence="12">
    <location>
        <begin position="12"/>
        <end position="20"/>
    </location>
</feature>
<feature type="strand" evidence="12">
    <location>
        <begin position="22"/>
        <end position="24"/>
    </location>
</feature>
<feature type="helix" evidence="12">
    <location>
        <begin position="25"/>
        <end position="38"/>
    </location>
</feature>
<feature type="strand" evidence="12">
    <location>
        <begin position="41"/>
        <end position="46"/>
    </location>
</feature>
<feature type="strand" evidence="12">
    <location>
        <begin position="49"/>
        <end position="52"/>
    </location>
</feature>
<feature type="strand" evidence="12">
    <location>
        <begin position="63"/>
        <end position="74"/>
    </location>
</feature>
<feature type="helix" evidence="12">
    <location>
        <begin position="76"/>
        <end position="90"/>
    </location>
</feature>
<feature type="strand" evidence="12">
    <location>
        <begin position="104"/>
        <end position="114"/>
    </location>
</feature>
<feature type="helix" evidence="12">
    <location>
        <begin position="126"/>
        <end position="130"/>
    </location>
</feature>
<feature type="helix" evidence="12">
    <location>
        <begin position="132"/>
        <end position="139"/>
    </location>
</feature>
<feature type="turn" evidence="12">
    <location>
        <begin position="147"/>
        <end position="149"/>
    </location>
</feature>
<feature type="helix" evidence="12">
    <location>
        <begin position="153"/>
        <end position="158"/>
    </location>
</feature>
<feature type="helix" evidence="12">
    <location>
        <begin position="165"/>
        <end position="173"/>
    </location>
</feature>
<feature type="helix" evidence="12">
    <location>
        <begin position="175"/>
        <end position="178"/>
    </location>
</feature>
<feature type="strand" evidence="12">
    <location>
        <begin position="184"/>
        <end position="191"/>
    </location>
</feature>
<feature type="strand" evidence="12">
    <location>
        <begin position="194"/>
        <end position="196"/>
    </location>
</feature>
<feature type="strand" evidence="12">
    <location>
        <begin position="203"/>
        <end position="210"/>
    </location>
</feature>
<feature type="helix" evidence="12">
    <location>
        <begin position="224"/>
        <end position="236"/>
    </location>
</feature>
<feature type="strand" evidence="12">
    <location>
        <begin position="241"/>
        <end position="245"/>
    </location>
</feature>
<feature type="helix" evidence="12">
    <location>
        <begin position="258"/>
        <end position="274"/>
    </location>
</feature>
<feature type="helix" evidence="12">
    <location>
        <begin position="276"/>
        <end position="278"/>
    </location>
</feature>
<feature type="strand" evidence="12">
    <location>
        <begin position="282"/>
        <end position="286"/>
    </location>
</feature>
<feature type="helix" evidence="12">
    <location>
        <begin position="290"/>
        <end position="298"/>
    </location>
</feature>
<feature type="strand" evidence="12">
    <location>
        <begin position="302"/>
        <end position="306"/>
    </location>
</feature>
<feature type="helix" evidence="12">
    <location>
        <begin position="315"/>
        <end position="322"/>
    </location>
</feature>
<feature type="strand" evidence="12">
    <location>
        <begin position="327"/>
        <end position="330"/>
    </location>
</feature>
<feature type="helix" evidence="12">
    <location>
        <begin position="350"/>
        <end position="367"/>
    </location>
</feature>
<feature type="helix" evidence="12">
    <location>
        <begin position="372"/>
        <end position="374"/>
    </location>
</feature>
<feature type="strand" evidence="12">
    <location>
        <begin position="375"/>
        <end position="378"/>
    </location>
</feature>
<feature type="strand" evidence="12">
    <location>
        <begin position="384"/>
        <end position="386"/>
    </location>
</feature>
<feature type="helix" evidence="12">
    <location>
        <begin position="387"/>
        <end position="395"/>
    </location>
</feature>
<feature type="helix" evidence="12">
    <location>
        <begin position="397"/>
        <end position="407"/>
    </location>
</feature>
<feature type="helix" evidence="12">
    <location>
        <begin position="409"/>
        <end position="412"/>
    </location>
</feature>
<feature type="strand" evidence="12">
    <location>
        <begin position="416"/>
        <end position="418"/>
    </location>
</feature>
<feature type="helix" evidence="12">
    <location>
        <begin position="424"/>
        <end position="430"/>
    </location>
</feature>
<feature type="helix" evidence="12">
    <location>
        <begin position="435"/>
        <end position="437"/>
    </location>
</feature>
<feature type="helix" evidence="12">
    <location>
        <begin position="439"/>
        <end position="451"/>
    </location>
</feature>
<feature type="strand" evidence="12">
    <location>
        <begin position="455"/>
        <end position="461"/>
    </location>
</feature>
<feature type="helix" evidence="12">
    <location>
        <begin position="462"/>
        <end position="475"/>
    </location>
</feature>
<gene>
    <name evidence="6" type="primary">CytHPPK/DHPS</name>
    <name evidence="8" type="ordered locus">At1g69190</name>
    <name evidence="10" type="ORF">F23O10.22</name>
    <name evidence="9" type="ORF">F4N2.15</name>
</gene>
<proteinExistence type="evidence at protein level"/>
<protein>
    <recommendedName>
        <fullName evidence="6">Folate synthesis bifunctional protein</fullName>
    </recommendedName>
    <domain>
        <recommendedName>
            <fullName evidence="6">6-hydroxymethyl-7,8-dihydropterin pyrophosphokinase</fullName>
            <shortName evidence="6">HPPK</shortName>
            <ecNumber evidence="4">2.7.6.3</ecNumber>
        </recommendedName>
        <alternativeName>
            <fullName>2-amino-4-hydroxy-6-hydroxymethyldihydropteridine diphosphokinase</fullName>
        </alternativeName>
        <alternativeName>
            <fullName>7,8-dihydro-6-hydroxymethylpterin-pyrophosphokinase</fullName>
            <shortName>PPPK</shortName>
        </alternativeName>
    </domain>
    <domain>
        <recommendedName>
            <fullName evidence="6">Dihydropteroate synthase</fullName>
            <shortName evidence="6">DHPS</shortName>
            <ecNumber evidence="4">2.5.1.15</ecNumber>
        </recommendedName>
    </domain>
</protein>
<keyword id="KW-0002">3D-structure</keyword>
<keyword id="KW-0067">ATP-binding</keyword>
<keyword id="KW-0963">Cytoplasm</keyword>
<keyword id="KW-0289">Folate biosynthesis</keyword>
<keyword id="KW-0418">Kinase</keyword>
<keyword id="KW-0460">Magnesium</keyword>
<keyword id="KW-0479">Metal-binding</keyword>
<keyword id="KW-0511">Multifunctional enzyme</keyword>
<keyword id="KW-0547">Nucleotide-binding</keyword>
<keyword id="KW-1185">Reference proteome</keyword>
<keyword id="KW-0808">Transferase</keyword>
<accession>Q1ENB6</accession>
<accession>Q9LE77</accession>
<name>FOLC_ARATH</name>